<organism>
    <name type="scientific">Wolffiella gladiata</name>
    <name type="common">Florida mud-midget</name>
    <dbReference type="NCBI Taxonomy" id="161124"/>
    <lineage>
        <taxon>Eukaryota</taxon>
        <taxon>Viridiplantae</taxon>
        <taxon>Streptophyta</taxon>
        <taxon>Embryophyta</taxon>
        <taxon>Tracheophyta</taxon>
        <taxon>Spermatophyta</taxon>
        <taxon>Magnoliopsida</taxon>
        <taxon>Liliopsida</taxon>
        <taxon>Araceae</taxon>
        <taxon>Lemnoideae</taxon>
        <taxon>Wolffiella</taxon>
    </lineage>
</organism>
<geneLocation type="chloroplast"/>
<keyword id="KW-0150">Chloroplast</keyword>
<keyword id="KW-0507">mRNA processing</keyword>
<keyword id="KW-0934">Plastid</keyword>
<keyword id="KW-0694">RNA-binding</keyword>
<keyword id="KW-0819">tRNA processing</keyword>
<dbReference type="EMBL" id="AY034205">
    <property type="protein sequence ID" value="AAK61576.1"/>
    <property type="molecule type" value="Genomic_DNA"/>
</dbReference>
<dbReference type="GO" id="GO:0009507">
    <property type="term" value="C:chloroplast"/>
    <property type="evidence" value="ECO:0007669"/>
    <property type="project" value="UniProtKB-SubCell"/>
</dbReference>
<dbReference type="GO" id="GO:0003723">
    <property type="term" value="F:RNA binding"/>
    <property type="evidence" value="ECO:0007669"/>
    <property type="project" value="UniProtKB-KW"/>
</dbReference>
<dbReference type="GO" id="GO:0006397">
    <property type="term" value="P:mRNA processing"/>
    <property type="evidence" value="ECO:0007669"/>
    <property type="project" value="UniProtKB-KW"/>
</dbReference>
<dbReference type="GO" id="GO:0008380">
    <property type="term" value="P:RNA splicing"/>
    <property type="evidence" value="ECO:0007669"/>
    <property type="project" value="UniProtKB-UniRule"/>
</dbReference>
<dbReference type="GO" id="GO:0008033">
    <property type="term" value="P:tRNA processing"/>
    <property type="evidence" value="ECO:0007669"/>
    <property type="project" value="UniProtKB-KW"/>
</dbReference>
<dbReference type="HAMAP" id="MF_01390">
    <property type="entry name" value="MatK"/>
    <property type="match status" value="1"/>
</dbReference>
<dbReference type="InterPro" id="IPR024937">
    <property type="entry name" value="Domain_X"/>
</dbReference>
<dbReference type="InterPro" id="IPR002866">
    <property type="entry name" value="Maturase_MatK"/>
</dbReference>
<dbReference type="InterPro" id="IPR024942">
    <property type="entry name" value="Maturase_MatK_N"/>
</dbReference>
<dbReference type="PANTHER" id="PTHR34811">
    <property type="entry name" value="MATURASE K"/>
    <property type="match status" value="1"/>
</dbReference>
<dbReference type="PANTHER" id="PTHR34811:SF1">
    <property type="entry name" value="MATURASE K"/>
    <property type="match status" value="1"/>
</dbReference>
<dbReference type="Pfam" id="PF01348">
    <property type="entry name" value="Intron_maturas2"/>
    <property type="match status" value="1"/>
</dbReference>
<dbReference type="Pfam" id="PF01824">
    <property type="entry name" value="MatK_N"/>
    <property type="match status" value="1"/>
</dbReference>
<reference key="1">
    <citation type="journal article" date="2002" name="Syst. Bot.">
        <title>Phylogeny and systematics of Lemnaceae, the duckweed family.</title>
        <authorList>
            <person name="Les D.H."/>
            <person name="Crawford D.J."/>
            <person name="Landolt E."/>
            <person name="Gabel J.D."/>
            <person name="Kimball R.T."/>
        </authorList>
        <dbReference type="AGRICOLA" id="IND23289763"/>
    </citation>
    <scope>NUCLEOTIDE SEQUENCE [GENOMIC DNA]</scope>
</reference>
<accession>Q8WHK8</accession>
<feature type="chain" id="PRO_0000143792" description="Maturase K">
    <location>
        <begin position="1"/>
        <end position="512"/>
    </location>
</feature>
<gene>
    <name evidence="1" type="primary">matK</name>
</gene>
<name>MATK_WOLGL</name>
<sequence>MEEFKGYLEKGGFKQQHFLYPLLFQEYIYALAYDQGLNVNASTFNEPVEISGYDKKYSSLLVKRLIKRLYQQNSLIHSVNNAKQNRFVGHNKNFYYQMISEGFSIVVEIPFSLRLISSLKEKKEIPKYQNLRSIHSIFSFLEDKFAHLNYISDILIPYPVHLEKLIQILQCWIQDVPTLHLLRLFFHDYHNWSNDITITTNKSTYGFSKDNARLYRFLYNSYVVECESIFVFLRKSSSYLQSTSFGPLLERTHFYGKMKDIGIISCNDFQKPLGLFKDPFMHYVRYQGKSIIASRGTHLLLKKWKSYFLNLWQCHFHFWSQPSRIHINQFAHFSFYFLGYLSSVEMNPSSMKSQMLENSFLIDTVTPKFQTLIAIIPMIGSLARAKFCNLSGNPISKPVWTDLSDSEIIDRFGRLCRNISHYYSGSSKKQSLYRIKYILRLSCARTLARKHKTTVRTFLQRLGSEFFEEFFMEEEKVLSLMLARTSYPLHQLYREPIWYLDIIRINDLVNHL</sequence>
<proteinExistence type="inferred from homology"/>
<protein>
    <recommendedName>
        <fullName evidence="1">Maturase K</fullName>
    </recommendedName>
    <alternativeName>
        <fullName evidence="1">Intron maturase</fullName>
    </alternativeName>
</protein>
<evidence type="ECO:0000255" key="1">
    <source>
        <dbReference type="HAMAP-Rule" id="MF_01390"/>
    </source>
</evidence>
<comment type="function">
    <text evidence="1">Usually encoded in the trnK tRNA gene intron. Probably assists in splicing its own and other chloroplast group II introns.</text>
</comment>
<comment type="subcellular location">
    <subcellularLocation>
        <location>Plastid</location>
        <location>Chloroplast</location>
    </subcellularLocation>
</comment>
<comment type="similarity">
    <text evidence="1">Belongs to the intron maturase 2 family. MatK subfamily.</text>
</comment>